<sequence length="102" mass="10955">MGAIPLEHGLAVAGILFCLGLVGLMVRRNILFVLMSLEVMMNASALAFIVAGARWVQPDGQVMFILVISLAAAEASIGLAILLQLYRRFHTLDIDAASEMRG</sequence>
<protein>
    <recommendedName>
        <fullName evidence="1">NADH-quinone oxidoreductase subunit K</fullName>
        <ecNumber evidence="1">7.1.1.-</ecNumber>
    </recommendedName>
    <alternativeName>
        <fullName evidence="1">NADH dehydrogenase I subunit K</fullName>
    </alternativeName>
    <alternativeName>
        <fullName evidence="1">NDH-1 subunit K</fullName>
    </alternativeName>
</protein>
<gene>
    <name evidence="1" type="primary">nuoK</name>
    <name type="ordered locus">PputW619_1864</name>
</gene>
<accession>B1J6S8</accession>
<feature type="chain" id="PRO_0000390174" description="NADH-quinone oxidoreductase subunit K">
    <location>
        <begin position="1"/>
        <end position="102"/>
    </location>
</feature>
<feature type="transmembrane region" description="Helical" evidence="1">
    <location>
        <begin position="6"/>
        <end position="26"/>
    </location>
</feature>
<feature type="transmembrane region" description="Helical" evidence="1">
    <location>
        <begin position="30"/>
        <end position="50"/>
    </location>
</feature>
<feature type="transmembrane region" description="Helical" evidence="1">
    <location>
        <begin position="62"/>
        <end position="82"/>
    </location>
</feature>
<reference key="1">
    <citation type="submission" date="2008-02" db="EMBL/GenBank/DDBJ databases">
        <title>Complete sequence of Pseudomonas putida W619.</title>
        <authorList>
            <person name="Copeland A."/>
            <person name="Lucas S."/>
            <person name="Lapidus A."/>
            <person name="Barry K."/>
            <person name="Detter J.C."/>
            <person name="Glavina del Rio T."/>
            <person name="Dalin E."/>
            <person name="Tice H."/>
            <person name="Pitluck S."/>
            <person name="Chain P."/>
            <person name="Malfatti S."/>
            <person name="Shin M."/>
            <person name="Vergez L."/>
            <person name="Schmutz J."/>
            <person name="Larimer F."/>
            <person name="Land M."/>
            <person name="Hauser L."/>
            <person name="Kyrpides N."/>
            <person name="Kim E."/>
            <person name="Taghavi S."/>
            <person name="Vangronsveld D."/>
            <person name="van der Lelie D."/>
            <person name="Richardson P."/>
        </authorList>
    </citation>
    <scope>NUCLEOTIDE SEQUENCE [LARGE SCALE GENOMIC DNA]</scope>
    <source>
        <strain>W619</strain>
    </source>
</reference>
<keyword id="KW-0997">Cell inner membrane</keyword>
<keyword id="KW-1003">Cell membrane</keyword>
<keyword id="KW-0472">Membrane</keyword>
<keyword id="KW-0520">NAD</keyword>
<keyword id="KW-0874">Quinone</keyword>
<keyword id="KW-1278">Translocase</keyword>
<keyword id="KW-0812">Transmembrane</keyword>
<keyword id="KW-1133">Transmembrane helix</keyword>
<keyword id="KW-0813">Transport</keyword>
<keyword id="KW-0830">Ubiquinone</keyword>
<proteinExistence type="inferred from homology"/>
<organism>
    <name type="scientific">Pseudomonas putida (strain W619)</name>
    <dbReference type="NCBI Taxonomy" id="390235"/>
    <lineage>
        <taxon>Bacteria</taxon>
        <taxon>Pseudomonadati</taxon>
        <taxon>Pseudomonadota</taxon>
        <taxon>Gammaproteobacteria</taxon>
        <taxon>Pseudomonadales</taxon>
        <taxon>Pseudomonadaceae</taxon>
        <taxon>Pseudomonas</taxon>
    </lineage>
</organism>
<dbReference type="EC" id="7.1.1.-" evidence="1"/>
<dbReference type="EMBL" id="CP000949">
    <property type="protein sequence ID" value="ACA72367.1"/>
    <property type="molecule type" value="Genomic_DNA"/>
</dbReference>
<dbReference type="SMR" id="B1J6S8"/>
<dbReference type="STRING" id="390235.PputW619_1864"/>
<dbReference type="KEGG" id="ppw:PputW619_1864"/>
<dbReference type="eggNOG" id="COG0713">
    <property type="taxonomic scope" value="Bacteria"/>
</dbReference>
<dbReference type="HOGENOM" id="CLU_144724_0_1_6"/>
<dbReference type="OrthoDB" id="9801357at2"/>
<dbReference type="GO" id="GO:0030964">
    <property type="term" value="C:NADH dehydrogenase complex"/>
    <property type="evidence" value="ECO:0007669"/>
    <property type="project" value="TreeGrafter"/>
</dbReference>
<dbReference type="GO" id="GO:0005886">
    <property type="term" value="C:plasma membrane"/>
    <property type="evidence" value="ECO:0007669"/>
    <property type="project" value="UniProtKB-SubCell"/>
</dbReference>
<dbReference type="GO" id="GO:0050136">
    <property type="term" value="F:NADH:ubiquinone reductase (non-electrogenic) activity"/>
    <property type="evidence" value="ECO:0007669"/>
    <property type="project" value="UniProtKB-UniRule"/>
</dbReference>
<dbReference type="GO" id="GO:0048038">
    <property type="term" value="F:quinone binding"/>
    <property type="evidence" value="ECO:0007669"/>
    <property type="project" value="UniProtKB-KW"/>
</dbReference>
<dbReference type="GO" id="GO:0042773">
    <property type="term" value="P:ATP synthesis coupled electron transport"/>
    <property type="evidence" value="ECO:0007669"/>
    <property type="project" value="InterPro"/>
</dbReference>
<dbReference type="FunFam" id="1.10.287.3510:FF:000001">
    <property type="entry name" value="NADH-quinone oxidoreductase subunit K"/>
    <property type="match status" value="1"/>
</dbReference>
<dbReference type="Gene3D" id="1.10.287.3510">
    <property type="match status" value="1"/>
</dbReference>
<dbReference type="HAMAP" id="MF_01456">
    <property type="entry name" value="NDH1_NuoK"/>
    <property type="match status" value="1"/>
</dbReference>
<dbReference type="InterPro" id="IPR001133">
    <property type="entry name" value="NADH_UbQ_OxRdtase_chain4L/K"/>
</dbReference>
<dbReference type="InterPro" id="IPR039428">
    <property type="entry name" value="NUOK/Mnh_C1-like"/>
</dbReference>
<dbReference type="NCBIfam" id="NF004319">
    <property type="entry name" value="PRK05715.1-1"/>
    <property type="match status" value="1"/>
</dbReference>
<dbReference type="NCBIfam" id="NF004320">
    <property type="entry name" value="PRK05715.1-2"/>
    <property type="match status" value="1"/>
</dbReference>
<dbReference type="PANTHER" id="PTHR11434:SF16">
    <property type="entry name" value="NADH-UBIQUINONE OXIDOREDUCTASE CHAIN 4L"/>
    <property type="match status" value="1"/>
</dbReference>
<dbReference type="PANTHER" id="PTHR11434">
    <property type="entry name" value="NADH-UBIQUINONE OXIDOREDUCTASE SUBUNIT ND4L"/>
    <property type="match status" value="1"/>
</dbReference>
<dbReference type="Pfam" id="PF00420">
    <property type="entry name" value="Oxidored_q2"/>
    <property type="match status" value="1"/>
</dbReference>
<evidence type="ECO:0000255" key="1">
    <source>
        <dbReference type="HAMAP-Rule" id="MF_01456"/>
    </source>
</evidence>
<comment type="function">
    <text evidence="1">NDH-1 shuttles electrons from NADH, via FMN and iron-sulfur (Fe-S) centers, to quinones in the respiratory chain. The immediate electron acceptor for the enzyme in this species is believed to be ubiquinone. Couples the redox reaction to proton translocation (for every two electrons transferred, four hydrogen ions are translocated across the cytoplasmic membrane), and thus conserves the redox energy in a proton gradient.</text>
</comment>
<comment type="catalytic activity">
    <reaction evidence="1">
        <text>a quinone + NADH + 5 H(+)(in) = a quinol + NAD(+) + 4 H(+)(out)</text>
        <dbReference type="Rhea" id="RHEA:57888"/>
        <dbReference type="ChEBI" id="CHEBI:15378"/>
        <dbReference type="ChEBI" id="CHEBI:24646"/>
        <dbReference type="ChEBI" id="CHEBI:57540"/>
        <dbReference type="ChEBI" id="CHEBI:57945"/>
        <dbReference type="ChEBI" id="CHEBI:132124"/>
    </reaction>
</comment>
<comment type="subunit">
    <text evidence="1">NDH-1 is composed of 13 different subunits. Subunits NuoA, H, J, K, L, M, N constitute the membrane sector of the complex.</text>
</comment>
<comment type="subcellular location">
    <subcellularLocation>
        <location evidence="1">Cell inner membrane</location>
        <topology evidence="1">Multi-pass membrane protein</topology>
    </subcellularLocation>
</comment>
<comment type="similarity">
    <text evidence="1">Belongs to the complex I subunit 4L family.</text>
</comment>
<name>NUOK_PSEPW</name>